<keyword id="KW-1003">Cell membrane</keyword>
<keyword id="KW-1017">Isopeptide bond</keyword>
<keyword id="KW-0472">Membrane</keyword>
<keyword id="KW-0597">Phosphoprotein</keyword>
<keyword id="KW-0832">Ubl conjugation</keyword>
<gene>
    <name type="primary">MDG1</name>
    <name type="ORF">SCRG_03305</name>
</gene>
<comment type="function">
    <text evidence="1">Involved in G-protein mediated signal transduction and in the regulation of polarized cell growth in pheromone-induced cells.</text>
</comment>
<comment type="subcellular location">
    <subcellularLocation>
        <location evidence="1">Cell membrane</location>
        <topology evidence="1">Peripheral membrane protein</topology>
    </subcellularLocation>
</comment>
<comment type="similarity">
    <text evidence="4">Belongs to the CRP1/MDG1 family.</text>
</comment>
<accession>B3LP25</accession>
<dbReference type="EMBL" id="CH408049">
    <property type="protein sequence ID" value="EDV12420.1"/>
    <property type="molecule type" value="Genomic_DNA"/>
</dbReference>
<dbReference type="SMR" id="B3LP25"/>
<dbReference type="HOGENOM" id="CLU_765367_0_0_1"/>
<dbReference type="OrthoDB" id="40992at4893"/>
<dbReference type="Proteomes" id="UP000008335">
    <property type="component" value="Unassembled WGS sequence"/>
</dbReference>
<dbReference type="GO" id="GO:0005737">
    <property type="term" value="C:cytoplasm"/>
    <property type="evidence" value="ECO:0007669"/>
    <property type="project" value="TreeGrafter"/>
</dbReference>
<dbReference type="GO" id="GO:0031588">
    <property type="term" value="C:nucleotide-activated protein kinase complex"/>
    <property type="evidence" value="ECO:0007669"/>
    <property type="project" value="TreeGrafter"/>
</dbReference>
<dbReference type="GO" id="GO:0005634">
    <property type="term" value="C:nucleus"/>
    <property type="evidence" value="ECO:0007669"/>
    <property type="project" value="TreeGrafter"/>
</dbReference>
<dbReference type="GO" id="GO:0005886">
    <property type="term" value="C:plasma membrane"/>
    <property type="evidence" value="ECO:0007669"/>
    <property type="project" value="UniProtKB-SubCell"/>
</dbReference>
<dbReference type="GO" id="GO:0019901">
    <property type="term" value="F:protein kinase binding"/>
    <property type="evidence" value="ECO:0007669"/>
    <property type="project" value="TreeGrafter"/>
</dbReference>
<dbReference type="GO" id="GO:0007165">
    <property type="term" value="P:signal transduction"/>
    <property type="evidence" value="ECO:0007669"/>
    <property type="project" value="TreeGrafter"/>
</dbReference>
<dbReference type="CDD" id="cd02859">
    <property type="entry name" value="E_set_AMPKbeta_like_N"/>
    <property type="match status" value="1"/>
</dbReference>
<dbReference type="Gene3D" id="2.60.40.10">
    <property type="entry name" value="Immunoglobulins"/>
    <property type="match status" value="1"/>
</dbReference>
<dbReference type="InterPro" id="IPR032640">
    <property type="entry name" value="AMPK1_CBM"/>
</dbReference>
<dbReference type="InterPro" id="IPR050827">
    <property type="entry name" value="CRP1_MDG1_kinase"/>
</dbReference>
<dbReference type="InterPro" id="IPR013783">
    <property type="entry name" value="Ig-like_fold"/>
</dbReference>
<dbReference type="InterPro" id="IPR014756">
    <property type="entry name" value="Ig_E-set"/>
</dbReference>
<dbReference type="PANTHER" id="PTHR10343">
    <property type="entry name" value="5'-AMP-ACTIVATED PROTEIN KINASE , BETA SUBUNIT"/>
    <property type="match status" value="1"/>
</dbReference>
<dbReference type="PANTHER" id="PTHR10343:SF81">
    <property type="entry name" value="CRUCIFORM DNA-RECOGNIZING PROTEIN 1-RELATED"/>
    <property type="match status" value="1"/>
</dbReference>
<dbReference type="Pfam" id="PF16561">
    <property type="entry name" value="AMPK1_CBM"/>
    <property type="match status" value="1"/>
</dbReference>
<dbReference type="SUPFAM" id="SSF81296">
    <property type="entry name" value="E set domains"/>
    <property type="match status" value="1"/>
</dbReference>
<name>MDG1_YEAS1</name>
<feature type="chain" id="PRO_0000409623" description="Signal transduction protein MDG1">
    <location>
        <begin position="1"/>
        <end position="366"/>
    </location>
</feature>
<feature type="region of interest" description="Disordered" evidence="3">
    <location>
        <begin position="159"/>
        <end position="180"/>
    </location>
</feature>
<feature type="region of interest" description="Disordered" evidence="3">
    <location>
        <begin position="217"/>
        <end position="366"/>
    </location>
</feature>
<feature type="compositionally biased region" description="Acidic residues" evidence="3">
    <location>
        <begin position="233"/>
        <end position="247"/>
    </location>
</feature>
<feature type="compositionally biased region" description="Basic and acidic residues" evidence="3">
    <location>
        <begin position="265"/>
        <end position="284"/>
    </location>
</feature>
<feature type="modified residue" description="Phosphoserine" evidence="2">
    <location>
        <position position="160"/>
    </location>
</feature>
<feature type="modified residue" description="Phosphothreonine" evidence="2">
    <location>
        <position position="216"/>
    </location>
</feature>
<feature type="modified residue" description="Phosphoserine" evidence="2">
    <location>
        <position position="288"/>
    </location>
</feature>
<feature type="cross-link" description="Glycyl lysine isopeptide (Lys-Gly) (interchain with G-Cter in ubiquitin)" evidence="2">
    <location>
        <position position="314"/>
    </location>
</feature>
<protein>
    <recommendedName>
        <fullName>Signal transduction protein MDG1</fullName>
    </recommendedName>
    <alternativeName>
        <fullName>Multicopy suppressor of defective G-protein 1</fullName>
    </alternativeName>
</protein>
<proteinExistence type="inferred from homology"/>
<evidence type="ECO:0000250" key="1"/>
<evidence type="ECO:0000250" key="2">
    <source>
        <dbReference type="UniProtKB" id="P53885"/>
    </source>
</evidence>
<evidence type="ECO:0000256" key="3">
    <source>
        <dbReference type="SAM" id="MobiDB-lite"/>
    </source>
</evidence>
<evidence type="ECO:0000305" key="4"/>
<organism>
    <name type="scientific">Saccharomyces cerevisiae (strain RM11-1a)</name>
    <name type="common">Baker's yeast</name>
    <dbReference type="NCBI Taxonomy" id="285006"/>
    <lineage>
        <taxon>Eukaryota</taxon>
        <taxon>Fungi</taxon>
        <taxon>Dikarya</taxon>
        <taxon>Ascomycota</taxon>
        <taxon>Saccharomycotina</taxon>
        <taxon>Saccharomycetes</taxon>
        <taxon>Saccharomycetales</taxon>
        <taxon>Saccharomycetaceae</taxon>
        <taxon>Saccharomyces</taxon>
    </lineage>
</organism>
<reference key="1">
    <citation type="submission" date="2005-03" db="EMBL/GenBank/DDBJ databases">
        <title>Annotation of the Saccharomyces cerevisiae RM11-1a genome.</title>
        <authorList>
            <consortium name="The Broad Institute Genome Sequencing Platform"/>
            <person name="Birren B.W."/>
            <person name="Lander E.S."/>
            <person name="Galagan J.E."/>
            <person name="Nusbaum C."/>
            <person name="Devon K."/>
            <person name="Cuomo C."/>
            <person name="Jaffe D.B."/>
            <person name="Butler J."/>
            <person name="Alvarez P."/>
            <person name="Gnerre S."/>
            <person name="Grabherr M."/>
            <person name="Kleber M."/>
            <person name="Mauceli E.W."/>
            <person name="Brockman W."/>
            <person name="MacCallum I.A."/>
            <person name="Rounsley S."/>
            <person name="Young S.K."/>
            <person name="LaButti K."/>
            <person name="Pushparaj V."/>
            <person name="DeCaprio D."/>
            <person name="Crawford M."/>
            <person name="Koehrsen M."/>
            <person name="Engels R."/>
            <person name="Montgomery P."/>
            <person name="Pearson M."/>
            <person name="Howarth C."/>
            <person name="Larson L."/>
            <person name="Luoma S."/>
            <person name="White J."/>
            <person name="O'Leary S."/>
            <person name="Kodira C.D."/>
            <person name="Zeng Q."/>
            <person name="Yandava C."/>
            <person name="Alvarado L."/>
            <person name="Pratt S."/>
            <person name="Kruglyak L."/>
        </authorList>
    </citation>
    <scope>NUCLEOTIDE SEQUENCE [LARGE SCALE GENOMIC DNA]</scope>
    <source>
        <strain>RM11-1a</strain>
    </source>
</reference>
<sequence length="366" mass="40278">MQSSLPQFTFKWPKGPEAIILTGTFDDWKGTLPMVKDPSGAFEITLPVTFDSPSSKFYFKFIVDGQWLPSKDYKVNIDEGVENNFITEEDVLKQRENGSSTLVPESAGLAVSKNAPLIEPEAEKRAKKLRKFKIKRVIKTNKQTGERSIFSQEVVELPDSEDETQQVNKTGKNADGLSGTTTIIENNVGVNEEKAIKPYEENHPKVNLVKSEGYVTDGLGKTQSSESRLYELSAEDLEKEEEEEDEDKGGGKDTSTSADAEASEDQNKEPLSKSAKFEKPEEKVPVSSITSHAKETSVKPTGKVATETQTYETKQGAPTAAAKKIEAKKATRPSKPKGTKETPNKGVQKNPAKNGGFFKKLAQLLK</sequence>